<comment type="function">
    <text evidence="1">Catalyzes the reversible conversion of ribose-5-phosphate to ribulose 5-phosphate.</text>
</comment>
<comment type="catalytic activity">
    <reaction evidence="1">
        <text>aldehydo-D-ribose 5-phosphate = D-ribulose 5-phosphate</text>
        <dbReference type="Rhea" id="RHEA:14657"/>
        <dbReference type="ChEBI" id="CHEBI:58121"/>
        <dbReference type="ChEBI" id="CHEBI:58273"/>
        <dbReference type="EC" id="5.3.1.6"/>
    </reaction>
</comment>
<comment type="pathway">
    <text evidence="1">Carbohydrate degradation; pentose phosphate pathway; D-ribose 5-phosphate from D-ribulose 5-phosphate (non-oxidative stage): step 1/1.</text>
</comment>
<comment type="subunit">
    <text evidence="1">Homodimer.</text>
</comment>
<comment type="similarity">
    <text evidence="1">Belongs to the ribose 5-phosphate isomerase family.</text>
</comment>
<proteinExistence type="inferred from homology"/>
<keyword id="KW-0413">Isomerase</keyword>
<evidence type="ECO:0000255" key="1">
    <source>
        <dbReference type="HAMAP-Rule" id="MF_00170"/>
    </source>
</evidence>
<gene>
    <name evidence="1" type="primary">rpiA</name>
    <name type="ordered locus">SpyM3_0608</name>
</gene>
<sequence length="227" mass="24277">MEALKKIAGVTAAQYVTDGMTIGLGTGSTAYYFVEEIGRRVKQEGLQVVGVTTSSVTSKQAEVLGIPLKSIDDIDSIDLTVDGADEVDKNFNGIKGGGAALLMEKIVATPTKEYIWVVDASKMVEHLGAFKLPVEVVQYGADRLFRVFEKAGYKPSFRMKGDSRLVTDMQNYIIDLDLGCIKDPVAFGHLLDGTVGVVEHGLFNGMVDKVIVASKDGVTVLEAPTAG</sequence>
<protein>
    <recommendedName>
        <fullName evidence="1">Ribose-5-phosphate isomerase A</fullName>
        <ecNumber evidence="1">5.3.1.6</ecNumber>
    </recommendedName>
    <alternativeName>
        <fullName evidence="1">Phosphoriboisomerase A</fullName>
        <shortName evidence="1">PRI</shortName>
    </alternativeName>
</protein>
<name>RPIA_STRP3</name>
<dbReference type="EC" id="5.3.1.6" evidence="1"/>
<dbReference type="EMBL" id="AE014074">
    <property type="protein sequence ID" value="AAM79215.1"/>
    <property type="molecule type" value="Genomic_DNA"/>
</dbReference>
<dbReference type="RefSeq" id="WP_010922176.1">
    <property type="nucleotide sequence ID" value="NC_004070.1"/>
</dbReference>
<dbReference type="SMR" id="P0DF26"/>
<dbReference type="KEGG" id="spg:SpyM3_0608"/>
<dbReference type="HOGENOM" id="CLU_056590_1_0_9"/>
<dbReference type="UniPathway" id="UPA00115">
    <property type="reaction ID" value="UER00412"/>
</dbReference>
<dbReference type="Proteomes" id="UP000000564">
    <property type="component" value="Chromosome"/>
</dbReference>
<dbReference type="GO" id="GO:0004751">
    <property type="term" value="F:ribose-5-phosphate isomerase activity"/>
    <property type="evidence" value="ECO:0007669"/>
    <property type="project" value="UniProtKB-UniRule"/>
</dbReference>
<dbReference type="GO" id="GO:0009052">
    <property type="term" value="P:pentose-phosphate shunt, non-oxidative branch"/>
    <property type="evidence" value="ECO:0007669"/>
    <property type="project" value="UniProtKB-UniRule"/>
</dbReference>
<dbReference type="CDD" id="cd01398">
    <property type="entry name" value="RPI_A"/>
    <property type="match status" value="1"/>
</dbReference>
<dbReference type="FunFam" id="3.40.50.1360:FF:000001">
    <property type="entry name" value="Ribose-5-phosphate isomerase A"/>
    <property type="match status" value="1"/>
</dbReference>
<dbReference type="Gene3D" id="3.30.70.260">
    <property type="match status" value="1"/>
</dbReference>
<dbReference type="Gene3D" id="3.40.50.1360">
    <property type="match status" value="1"/>
</dbReference>
<dbReference type="HAMAP" id="MF_00170">
    <property type="entry name" value="Rib_5P_isom_A"/>
    <property type="match status" value="1"/>
</dbReference>
<dbReference type="InterPro" id="IPR037171">
    <property type="entry name" value="NagB/RpiA_transferase-like"/>
</dbReference>
<dbReference type="InterPro" id="IPR050262">
    <property type="entry name" value="Ribose-5P_isomerase"/>
</dbReference>
<dbReference type="InterPro" id="IPR020672">
    <property type="entry name" value="Ribose5P_isomerase_typA_subgr"/>
</dbReference>
<dbReference type="InterPro" id="IPR004788">
    <property type="entry name" value="Ribose5P_isomerase_type_A"/>
</dbReference>
<dbReference type="NCBIfam" id="NF001924">
    <property type="entry name" value="PRK00702.1"/>
    <property type="match status" value="1"/>
</dbReference>
<dbReference type="NCBIfam" id="TIGR00021">
    <property type="entry name" value="rpiA"/>
    <property type="match status" value="1"/>
</dbReference>
<dbReference type="PANTHER" id="PTHR43748">
    <property type="entry name" value="RIBOSE-5-PHOSPHATE ISOMERASE 3, CHLOROPLASTIC-RELATED"/>
    <property type="match status" value="1"/>
</dbReference>
<dbReference type="PANTHER" id="PTHR43748:SF3">
    <property type="entry name" value="RIBOSE-5-PHOSPHATE ISOMERASE 3, CHLOROPLASTIC-RELATED"/>
    <property type="match status" value="1"/>
</dbReference>
<dbReference type="Pfam" id="PF06026">
    <property type="entry name" value="Rib_5-P_isom_A"/>
    <property type="match status" value="1"/>
</dbReference>
<dbReference type="SUPFAM" id="SSF75445">
    <property type="entry name" value="D-ribose-5-phosphate isomerase (RpiA), lid domain"/>
    <property type="match status" value="1"/>
</dbReference>
<dbReference type="SUPFAM" id="SSF100950">
    <property type="entry name" value="NagB/RpiA/CoA transferase-like"/>
    <property type="match status" value="1"/>
</dbReference>
<feature type="chain" id="PRO_0000158477" description="Ribose-5-phosphate isomerase A">
    <location>
        <begin position="1"/>
        <end position="227"/>
    </location>
</feature>
<feature type="active site" description="Proton acceptor" evidence="1">
    <location>
        <position position="104"/>
    </location>
</feature>
<feature type="binding site" evidence="1">
    <location>
        <begin position="26"/>
        <end position="29"/>
    </location>
    <ligand>
        <name>substrate</name>
    </ligand>
</feature>
<feature type="binding site" evidence="1">
    <location>
        <begin position="82"/>
        <end position="85"/>
    </location>
    <ligand>
        <name>substrate</name>
    </ligand>
</feature>
<feature type="binding site" evidence="1">
    <location>
        <begin position="95"/>
        <end position="98"/>
    </location>
    <ligand>
        <name>substrate</name>
    </ligand>
</feature>
<feature type="binding site" evidence="1">
    <location>
        <position position="122"/>
    </location>
    <ligand>
        <name>substrate</name>
    </ligand>
</feature>
<accession>P0DF26</accession>
<accession>P66698</accession>
<accession>Q9A085</accession>
<reference key="1">
    <citation type="journal article" date="2002" name="Proc. Natl. Acad. Sci. U.S.A.">
        <title>Genome sequence of a serotype M3 strain of group A Streptococcus: phage-encoded toxins, the high-virulence phenotype, and clone emergence.</title>
        <authorList>
            <person name="Beres S.B."/>
            <person name="Sylva G.L."/>
            <person name="Barbian K.D."/>
            <person name="Lei B."/>
            <person name="Hoff J.S."/>
            <person name="Mammarella N.D."/>
            <person name="Liu M.-Y."/>
            <person name="Smoot J.C."/>
            <person name="Porcella S.F."/>
            <person name="Parkins L.D."/>
            <person name="Campbell D.S."/>
            <person name="Smith T.M."/>
            <person name="McCormick J.K."/>
            <person name="Leung D.Y.M."/>
            <person name="Schlievert P.M."/>
            <person name="Musser J.M."/>
        </authorList>
    </citation>
    <scope>NUCLEOTIDE SEQUENCE [LARGE SCALE GENOMIC DNA]</scope>
    <source>
        <strain>ATCC BAA-595 / MGAS315</strain>
    </source>
</reference>
<organism>
    <name type="scientific">Streptococcus pyogenes serotype M3 (strain ATCC BAA-595 / MGAS315)</name>
    <dbReference type="NCBI Taxonomy" id="198466"/>
    <lineage>
        <taxon>Bacteria</taxon>
        <taxon>Bacillati</taxon>
        <taxon>Bacillota</taxon>
        <taxon>Bacilli</taxon>
        <taxon>Lactobacillales</taxon>
        <taxon>Streptococcaceae</taxon>
        <taxon>Streptococcus</taxon>
    </lineage>
</organism>